<sequence length="452" mass="51461">MALSIKEDFSSAFAKNESAVNSSTFNNNMKTWKIQKRFQILYVFFFLLITGALFYYLIDNVLFPKNKKINEIMNTSKHVIIGFSIENSHDRIMKTVKQHRLKNYIKESLKFFKTGLTQKPHLGNAGDSVTLNDVANVMYYGEAQIGDNKQKFAFIFDTGSANLWVPSAQCNTIGCKTKNLYDSNKSKTYEKDGTKVEMNYVSGTVSGFFSKDIVTIANLSFPYKFIEVTDTNGFEPAYTLGQFDGIVGLGWKDLSIGSVDPVVVELKNQNKIEQAVFTFYLPFDDKHKGYLTIGGIEDRFYEGQLTYEKLNHDLYWQVDLDLHFGNLTVEKATAIVDSGTSSITAPTEFLNKFFEGLDVVKIPFLPLYITTCNNPKLPTLEFRSATNVYTLEPEYYLQQIFDFGISLCMVSIIPVDLNKNTFILGDPFMRKYFTVFDYDNHTVGFALAKKKL</sequence>
<proteinExistence type="evidence at protein level"/>
<feature type="propeptide" id="PRO_0000233400" evidence="1">
    <location>
        <begin position="1"/>
        <end position="123"/>
    </location>
</feature>
<feature type="chain" id="PRO_0000233401" description="Plasmepsin I">
    <location>
        <begin position="124"/>
        <end position="452"/>
    </location>
</feature>
<feature type="topological domain" description="Cytoplasmic" evidence="8">
    <location>
        <begin position="1"/>
        <end position="37"/>
    </location>
</feature>
<feature type="transmembrane region" description="Helical; Signal-anchor for type II membrane protein" evidence="2">
    <location>
        <begin position="38"/>
        <end position="58"/>
    </location>
</feature>
<feature type="topological domain" description="Lumenal" evidence="8">
    <location>
        <begin position="59"/>
        <end position="452"/>
    </location>
</feature>
<feature type="domain" description="Peptidase A1" evidence="3">
    <location>
        <begin position="139"/>
        <end position="446"/>
    </location>
</feature>
<feature type="active site" evidence="3">
    <location>
        <position position="157"/>
    </location>
</feature>
<feature type="active site" evidence="3">
    <location>
        <position position="337"/>
    </location>
</feature>
<feature type="disulfide bond" evidence="1">
    <location>
        <begin position="170"/>
        <end position="175"/>
    </location>
</feature>
<feature type="disulfide bond" evidence="1">
    <location>
        <begin position="372"/>
        <end position="408"/>
    </location>
</feature>
<gene>
    <name evidence="7" type="primary">PMI</name>
    <name type="ORF">PF14_0076</name>
    <name evidence="9" type="ORF">PF3D7_1407900</name>
</gene>
<organism>
    <name type="scientific">Plasmodium falciparum (isolate 3D7)</name>
    <dbReference type="NCBI Taxonomy" id="36329"/>
    <lineage>
        <taxon>Eukaryota</taxon>
        <taxon>Sar</taxon>
        <taxon>Alveolata</taxon>
        <taxon>Apicomplexa</taxon>
        <taxon>Aconoidasida</taxon>
        <taxon>Haemosporida</taxon>
        <taxon>Plasmodiidae</taxon>
        <taxon>Plasmodium</taxon>
        <taxon>Plasmodium (Laverania)</taxon>
    </lineage>
</organism>
<comment type="function">
    <text evidence="1">During the asexual blood stage, catalyzes the initial cleavage of native host hemoglobin (Hb) resulting in Hb denaturation; specifically cleaves between Phe-33 and Leu-34 of Hb alpha-chain. Digestion of host Hb is an essential step which provides the parasite with amino acids for protein synthesis, and regulates osmolarity.</text>
</comment>
<comment type="catalytic activity">
    <reaction evidence="6">
        <text>Hydrolysis of the 33-Phe-|-Leu-34 bond in the alpha-chain of hemoglobin, leading to denaturation of molecule.</text>
        <dbReference type="EC" id="3.4.23.38"/>
    </reaction>
</comment>
<comment type="activity regulation">
    <text evidence="6">Inhibited by KNI derived compounds KNI-10333 and to a lesser extent KNI-10743.</text>
</comment>
<comment type="subcellular location">
    <subcellularLocation>
        <location evidence="1">Membrane</location>
        <topology evidence="1">Single-pass type II membrane protein</topology>
    </subcellularLocation>
    <subcellularLocation>
        <location evidence="1">Vacuole lumen</location>
    </subcellularLocation>
    <subcellularLocation>
        <location evidence="1">Vacuole membrane</location>
    </subcellularLocation>
    <text evidence="1">At the beginning of the asexual blood stage, the transmembrane zymogen is transported to the cytostome, an endocytic structure spanning the parasite cell membrane and the parasitophorous vacuole membrane where host proteins such as hemoglobin are endocytosed. Following endocytosis, localizes to the cytostome vacuole membrane to be then delivered to the digestive (or food) vacuole where it is cleaved into the soluble and active enzyme. In trophozoites, localizes to the digestive vacuole, an acidic vacuole where host hemoglobin is digested.</text>
</comment>
<comment type="developmental stage">
    <text evidence="4">Expressed during the asexual blood stage including in trophozoites (at protein level).</text>
</comment>
<comment type="PTM">
    <text evidence="1">Not N-glycosylated.</text>
</comment>
<comment type="PTM">
    <text evidence="1 4">Proteolytically cleaved into the soluble active mature form in the digestive vacuole by cysteine protease falcipains; the process begins at the early ring stage (PubMed:14709539). Proteolysis requires an acidic environment (By similarity).</text>
</comment>
<comment type="disruption phenotype">
    <text evidence="5">No growth defect (PubMed:15513918). However, slight decrease in proliferation and slight increase in doubling time during the asexual blood stage in an amino acid-limited medium (PubMed:15513918).</text>
</comment>
<comment type="similarity">
    <text evidence="8">Belongs to the peptidase A1 family.</text>
</comment>
<name>PLM1_PLAF7</name>
<evidence type="ECO:0000250" key="1">
    <source>
        <dbReference type="UniProtKB" id="P39898"/>
    </source>
</evidence>
<evidence type="ECO:0000255" key="2"/>
<evidence type="ECO:0000255" key="3">
    <source>
        <dbReference type="PROSITE-ProRule" id="PRU01103"/>
    </source>
</evidence>
<evidence type="ECO:0000269" key="4">
    <source>
    </source>
</evidence>
<evidence type="ECO:0000269" key="5">
    <source>
    </source>
</evidence>
<evidence type="ECO:0000269" key="6">
    <source>
    </source>
</evidence>
<evidence type="ECO:0000303" key="7">
    <source>
    </source>
</evidence>
<evidence type="ECO:0000305" key="8"/>
<evidence type="ECO:0000312" key="9">
    <source>
        <dbReference type="EMBL" id="CZT99786.1"/>
    </source>
</evidence>
<protein>
    <recommendedName>
        <fullName evidence="7">Plasmepsin I</fullName>
        <ecNumber evidence="6">3.4.23.38</ecNumber>
    </recommendedName>
    <alternativeName>
        <fullName evidence="1">Aspartic hemoglobinase I</fullName>
    </alternativeName>
    <alternativeName>
        <fullName evidence="8">Plasmepsin 1</fullName>
    </alternativeName>
</protein>
<reference key="1">
    <citation type="journal article" date="2002" name="Nature">
        <title>Genome sequence of the human malaria parasite Plasmodium falciparum.</title>
        <authorList>
            <person name="Gardner M.J."/>
            <person name="Hall N."/>
            <person name="Fung E."/>
            <person name="White O."/>
            <person name="Berriman M."/>
            <person name="Hyman R.W."/>
            <person name="Carlton J.M."/>
            <person name="Pain A."/>
            <person name="Nelson K.E."/>
            <person name="Bowman S."/>
            <person name="Paulsen I.T."/>
            <person name="James K.D."/>
            <person name="Eisen J.A."/>
            <person name="Rutherford K.M."/>
            <person name="Salzberg S.L."/>
            <person name="Craig A."/>
            <person name="Kyes S."/>
            <person name="Chan M.-S."/>
            <person name="Nene V."/>
            <person name="Shallom S.J."/>
            <person name="Suh B."/>
            <person name="Peterson J."/>
            <person name="Angiuoli S."/>
            <person name="Pertea M."/>
            <person name="Allen J."/>
            <person name="Selengut J."/>
            <person name="Haft D."/>
            <person name="Mather M.W."/>
            <person name="Vaidya A.B."/>
            <person name="Martin D.M.A."/>
            <person name="Fairlamb A.H."/>
            <person name="Fraunholz M.J."/>
            <person name="Roos D.S."/>
            <person name="Ralph S.A."/>
            <person name="McFadden G.I."/>
            <person name="Cummings L.M."/>
            <person name="Subramanian G.M."/>
            <person name="Mungall C."/>
            <person name="Venter J.C."/>
            <person name="Carucci D.J."/>
            <person name="Hoffman S.L."/>
            <person name="Newbold C."/>
            <person name="Davis R.W."/>
            <person name="Fraser C.M."/>
            <person name="Barrell B.G."/>
        </authorList>
    </citation>
    <scope>NUCLEOTIDE SEQUENCE [LARGE SCALE GENOMIC DNA]</scope>
    <source>
        <strain>3D7</strain>
    </source>
</reference>
<reference key="2">
    <citation type="journal article" date="2004" name="J. Cell Biol.">
        <title>Trafficking of plasmepsin II to the food vacuole of the malaria parasite Plasmodium falciparum.</title>
        <authorList>
            <person name="Klemba M."/>
            <person name="Beatty W."/>
            <person name="Gluzman I."/>
            <person name="Goldberg D.E."/>
        </authorList>
    </citation>
    <scope>DEVELOPMENTAL STAGE</scope>
    <scope>PROTEOLYTIC CLEAVAGE</scope>
</reference>
<reference key="3">
    <citation type="journal article" date="2005" name="J. Biol. Chem.">
        <title>The role of Plasmodium falciparum food vacuole plasmepsins.</title>
        <authorList>
            <person name="Liu J."/>
            <person name="Gluzman I.Y."/>
            <person name="Drew M.E."/>
            <person name="Goldberg D.E."/>
        </authorList>
    </citation>
    <scope>DISRUPTION PHENOTYPE</scope>
</reference>
<reference key="4">
    <citation type="journal article" date="2018" name="FEBS J.">
        <title>Deciphering the mechanism of potent peptidomimetic inhibitors targeting plasmepsins - biochemical and structural insights.</title>
        <authorList>
            <person name="Mishra V."/>
            <person name="Rathore I."/>
            <person name="Arekar A."/>
            <person name="Sthanam L.K."/>
            <person name="Xiao H."/>
            <person name="Kiso Y."/>
            <person name="Sen S."/>
            <person name="Patankar S."/>
            <person name="Gustchina A."/>
            <person name="Hidaka K."/>
            <person name="Wlodawer A."/>
            <person name="Yada R.Y."/>
            <person name="Bhaumik P."/>
        </authorList>
    </citation>
    <scope>CATALYTIC ACTIVITY</scope>
    <scope>ACTIVITY REGULATION</scope>
</reference>
<keyword id="KW-0064">Aspartyl protease</keyword>
<keyword id="KW-1015">Disulfide bond</keyword>
<keyword id="KW-0378">Hydrolase</keyword>
<keyword id="KW-0472">Membrane</keyword>
<keyword id="KW-0645">Protease</keyword>
<keyword id="KW-1185">Reference proteome</keyword>
<keyword id="KW-0735">Signal-anchor</keyword>
<keyword id="KW-0812">Transmembrane</keyword>
<keyword id="KW-1133">Transmembrane helix</keyword>
<keyword id="KW-0926">Vacuole</keyword>
<keyword id="KW-0865">Zymogen</keyword>
<dbReference type="EC" id="3.4.23.38" evidence="6"/>
<dbReference type="EMBL" id="LN999946">
    <property type="protein sequence ID" value="CZT99786.1"/>
    <property type="molecule type" value="Genomic_DNA"/>
</dbReference>
<dbReference type="RefSeq" id="XP_001348249.1">
    <property type="nucleotide sequence ID" value="XM_001348213.1"/>
</dbReference>
<dbReference type="SMR" id="Q7KQM4"/>
<dbReference type="FunCoup" id="Q7KQM4">
    <property type="interactions" value="4"/>
</dbReference>
<dbReference type="STRING" id="36329.Q7KQM4"/>
<dbReference type="DrugBank" id="DB11638">
    <property type="generic name" value="Artenimol"/>
</dbReference>
<dbReference type="MEROPS" id="A01.022"/>
<dbReference type="SwissPalm" id="Q7KQM4"/>
<dbReference type="PaxDb" id="5833-PF14_0076"/>
<dbReference type="EnsemblProtists" id="CZT99786">
    <property type="protein sequence ID" value="CZT99786"/>
    <property type="gene ID" value="PF3D7_1407900"/>
</dbReference>
<dbReference type="GeneID" id="811658"/>
<dbReference type="KEGG" id="pfa:PF3D7_1407900"/>
<dbReference type="VEuPathDB" id="PlasmoDB:PF3D7_1407900"/>
<dbReference type="HOGENOM" id="CLU_013253_3_2_1"/>
<dbReference type="InParanoid" id="Q7KQM4"/>
<dbReference type="OMA" id="KGEYMIS"/>
<dbReference type="OrthoDB" id="771136at2759"/>
<dbReference type="PhylomeDB" id="Q7KQM4"/>
<dbReference type="Reactome" id="R-PFA-2132295">
    <property type="pathway name" value="MHC class II antigen presentation"/>
</dbReference>
<dbReference type="Reactome" id="R-PFA-6798695">
    <property type="pathway name" value="Neutrophil degranulation"/>
</dbReference>
<dbReference type="Proteomes" id="UP000001450">
    <property type="component" value="Chromosome 14"/>
</dbReference>
<dbReference type="GO" id="GO:0020020">
    <property type="term" value="C:food vacuole"/>
    <property type="evidence" value="ECO:0000304"/>
    <property type="project" value="GeneDB"/>
</dbReference>
<dbReference type="GO" id="GO:0005764">
    <property type="term" value="C:lysosome"/>
    <property type="evidence" value="ECO:0000318"/>
    <property type="project" value="GO_Central"/>
</dbReference>
<dbReference type="GO" id="GO:0005775">
    <property type="term" value="C:vacuolar lumen"/>
    <property type="evidence" value="ECO:0007669"/>
    <property type="project" value="UniProtKB-SubCell"/>
</dbReference>
<dbReference type="GO" id="GO:0005774">
    <property type="term" value="C:vacuolar membrane"/>
    <property type="evidence" value="ECO:0007669"/>
    <property type="project" value="UniProtKB-SubCell"/>
</dbReference>
<dbReference type="GO" id="GO:0004190">
    <property type="term" value="F:aspartic-type endopeptidase activity"/>
    <property type="evidence" value="ECO:0000314"/>
    <property type="project" value="UniProtKB"/>
</dbReference>
<dbReference type="GO" id="GO:0042540">
    <property type="term" value="P:hemoglobin catabolic process"/>
    <property type="evidence" value="ECO:0000304"/>
    <property type="project" value="GeneDB"/>
</dbReference>
<dbReference type="GO" id="GO:0006508">
    <property type="term" value="P:proteolysis"/>
    <property type="evidence" value="ECO:0000318"/>
    <property type="project" value="GO_Central"/>
</dbReference>
<dbReference type="CDD" id="cd05471">
    <property type="entry name" value="pepsin_like"/>
    <property type="match status" value="1"/>
</dbReference>
<dbReference type="FunFam" id="2.40.70.10:FF:000035">
    <property type="entry name" value="Plasmepsin-2"/>
    <property type="match status" value="1"/>
</dbReference>
<dbReference type="FunFam" id="2.40.70.10:FF:000038">
    <property type="entry name" value="Plasmepsin-2"/>
    <property type="match status" value="1"/>
</dbReference>
<dbReference type="Gene3D" id="2.40.70.10">
    <property type="entry name" value="Acid Proteases"/>
    <property type="match status" value="2"/>
</dbReference>
<dbReference type="InterPro" id="IPR001461">
    <property type="entry name" value="Aspartic_peptidase_A1"/>
</dbReference>
<dbReference type="InterPro" id="IPR001969">
    <property type="entry name" value="Aspartic_peptidase_AS"/>
</dbReference>
<dbReference type="InterPro" id="IPR034164">
    <property type="entry name" value="Pepsin-like_dom"/>
</dbReference>
<dbReference type="InterPro" id="IPR033121">
    <property type="entry name" value="PEPTIDASE_A1"/>
</dbReference>
<dbReference type="InterPro" id="IPR021109">
    <property type="entry name" value="Peptidase_aspartic_dom_sf"/>
</dbReference>
<dbReference type="PANTHER" id="PTHR47966">
    <property type="entry name" value="BETA-SITE APP-CLEAVING ENZYME, ISOFORM A-RELATED"/>
    <property type="match status" value="1"/>
</dbReference>
<dbReference type="PANTHER" id="PTHR47966:SF51">
    <property type="entry name" value="BETA-SITE APP-CLEAVING ENZYME, ISOFORM A-RELATED"/>
    <property type="match status" value="1"/>
</dbReference>
<dbReference type="Pfam" id="PF00026">
    <property type="entry name" value="Asp"/>
    <property type="match status" value="1"/>
</dbReference>
<dbReference type="PRINTS" id="PR00792">
    <property type="entry name" value="PEPSIN"/>
</dbReference>
<dbReference type="SUPFAM" id="SSF50630">
    <property type="entry name" value="Acid proteases"/>
    <property type="match status" value="1"/>
</dbReference>
<dbReference type="PROSITE" id="PS00141">
    <property type="entry name" value="ASP_PROTEASE"/>
    <property type="match status" value="2"/>
</dbReference>
<dbReference type="PROSITE" id="PS51767">
    <property type="entry name" value="PEPTIDASE_A1"/>
    <property type="match status" value="1"/>
</dbReference>
<accession>Q7KQM4</accession>
<accession>A0A144A171</accession>